<keyword id="KW-1185">Reference proteome</keyword>
<reference key="1">
    <citation type="submission" date="1993-06" db="EMBL/GenBank/DDBJ databases">
        <title>Ablation of maternal mRNA encoding a growth-related protein (B9) causes cleavage arrest in Xenopus embryos.</title>
        <authorList>
            <person name="Keiper B.D."/>
            <person name="Dworkin-Rastl E."/>
        </authorList>
    </citation>
    <scope>NUCLEOTIDE SEQUENCE [MRNA]</scope>
    <source>
        <tissue>Ovary</tissue>
    </source>
</reference>
<reference key="2">
    <citation type="submission" date="2004-04" db="EMBL/GenBank/DDBJ databases">
        <authorList>
            <consortium name="NIH - Xenopus Gene Collection (XGC) project"/>
        </authorList>
    </citation>
    <scope>NUCLEOTIDE SEQUENCE [LARGE SCALE MRNA]</scope>
    <source>
        <tissue>Ovary</tissue>
    </source>
</reference>
<feature type="chain" id="PRO_0000143817" description="Maternal B9.10 protein">
    <location>
        <begin position="1"/>
        <end position="237"/>
    </location>
</feature>
<proteinExistence type="evidence at transcript level"/>
<name>B910_XENLA</name>
<organism>
    <name type="scientific">Xenopus laevis</name>
    <name type="common">African clawed frog</name>
    <dbReference type="NCBI Taxonomy" id="8355"/>
    <lineage>
        <taxon>Eukaryota</taxon>
        <taxon>Metazoa</taxon>
        <taxon>Chordata</taxon>
        <taxon>Craniata</taxon>
        <taxon>Vertebrata</taxon>
        <taxon>Euteleostomi</taxon>
        <taxon>Amphibia</taxon>
        <taxon>Batrachia</taxon>
        <taxon>Anura</taxon>
        <taxon>Pipoidea</taxon>
        <taxon>Pipidae</taxon>
        <taxon>Xenopodinae</taxon>
        <taxon>Xenopus</taxon>
        <taxon>Xenopus</taxon>
    </lineage>
</organism>
<dbReference type="EMBL" id="X73317">
    <property type="protein sequence ID" value="CAA51747.1"/>
    <property type="molecule type" value="mRNA"/>
</dbReference>
<dbReference type="EMBL" id="BC068921">
    <property type="protein sequence ID" value="AAH68921.1"/>
    <property type="molecule type" value="mRNA"/>
</dbReference>
<dbReference type="PIR" id="S47351">
    <property type="entry name" value="S47351"/>
</dbReference>
<dbReference type="RefSeq" id="NP_001081023.1">
    <property type="nucleotide sequence ID" value="NM_001087554.1"/>
</dbReference>
<dbReference type="SMR" id="P40744"/>
<dbReference type="DNASU" id="394334"/>
<dbReference type="GeneID" id="394334"/>
<dbReference type="KEGG" id="xla:394334"/>
<dbReference type="AGR" id="Xenbase:XB-GENE-6254452"/>
<dbReference type="CTD" id="394334"/>
<dbReference type="Xenbase" id="XB-GENE-6254452">
    <property type="gene designation" value="btg4.L"/>
</dbReference>
<dbReference type="OrthoDB" id="19928at2759"/>
<dbReference type="Proteomes" id="UP000186698">
    <property type="component" value="Chromosome 7L"/>
</dbReference>
<dbReference type="Bgee" id="394334">
    <property type="expression patterns" value="Expressed in egg cell and 9 other cell types or tissues"/>
</dbReference>
<dbReference type="GO" id="GO:0005737">
    <property type="term" value="C:cytoplasm"/>
    <property type="evidence" value="ECO:0000318"/>
    <property type="project" value="GO_Central"/>
</dbReference>
<dbReference type="GO" id="GO:0005634">
    <property type="term" value="C:nucleus"/>
    <property type="evidence" value="ECO:0000318"/>
    <property type="project" value="GO_Central"/>
</dbReference>
<dbReference type="FunFam" id="3.90.640.90:FF:000002">
    <property type="entry name" value="BTG anti-proliferation factor 4"/>
    <property type="match status" value="1"/>
</dbReference>
<dbReference type="Gene3D" id="3.90.640.90">
    <property type="entry name" value="Anti-proliferative protein, N-terminal domain"/>
    <property type="match status" value="1"/>
</dbReference>
<dbReference type="InterPro" id="IPR002087">
    <property type="entry name" value="Anti_prolifrtn"/>
</dbReference>
<dbReference type="InterPro" id="IPR033332">
    <property type="entry name" value="BTG"/>
</dbReference>
<dbReference type="InterPro" id="IPR036054">
    <property type="entry name" value="BTG-like_sf"/>
</dbReference>
<dbReference type="PANTHER" id="PTHR22978">
    <property type="entry name" value="B-CELL TRANSLOCATION GENE"/>
    <property type="match status" value="1"/>
</dbReference>
<dbReference type="PANTHER" id="PTHR22978:SF5">
    <property type="entry name" value="PROTEIN BTG4"/>
    <property type="match status" value="1"/>
</dbReference>
<dbReference type="Pfam" id="PF07742">
    <property type="entry name" value="BTG"/>
    <property type="match status" value="1"/>
</dbReference>
<dbReference type="PRINTS" id="PR00310">
    <property type="entry name" value="ANTIPRLFBTG1"/>
</dbReference>
<dbReference type="SMART" id="SM00099">
    <property type="entry name" value="btg1"/>
    <property type="match status" value="1"/>
</dbReference>
<dbReference type="SUPFAM" id="SSF160696">
    <property type="entry name" value="BTG domain-like"/>
    <property type="match status" value="1"/>
</dbReference>
<dbReference type="PROSITE" id="PS00960">
    <property type="entry name" value="BTG_1"/>
    <property type="match status" value="1"/>
</dbReference>
<dbReference type="PROSITE" id="PS01203">
    <property type="entry name" value="BTG_2"/>
    <property type="match status" value="1"/>
</dbReference>
<accession>P40744</accession>
<accession>Q6B0J7</accession>
<comment type="similarity">
    <text evidence="1">Belongs to the BTG family.</text>
</comment>
<evidence type="ECO:0000305" key="1"/>
<protein>
    <recommendedName>
        <fullName>Maternal B9.10 protein</fullName>
    </recommendedName>
    <alternativeName>
        <fullName>p30 B9.10</fullName>
    </alternativeName>
</protein>
<sequence>MKEEIAATVVFLTMLVKKHKQLSKQKIEKFAAKLTTILFAKYKNHWYAENPMKGQAFRCIRINTYQAIDAVFEKACAESNVDFNDLGLPKEMTIWVDPFEVCCRYGEKNDPFTIASFKGKDGYNAPKRISHAVEKATSDYYSGTSSDEELTNKEPKTIPKVSNPNSIYQCADYSQAIPSWSQYPRRKNYQNNGYPPNPPMPYYPQQKAYKAFRQSSAFSGPRVDRYHWVNMKRSAIS</sequence>